<keyword id="KW-0456">Lyase</keyword>
<keyword id="KW-1185">Reference proteome</keyword>
<feature type="chain" id="PRO_0000403224" description="Cyanate hydratase">
    <location>
        <begin position="1"/>
        <end position="168"/>
    </location>
</feature>
<feature type="active site" evidence="1">
    <location>
        <position position="94"/>
    </location>
</feature>
<feature type="active site" evidence="1">
    <location>
        <position position="97"/>
    </location>
</feature>
<feature type="active site" evidence="1">
    <location>
        <position position="120"/>
    </location>
</feature>
<sequence length="168" mass="18608">MEGGGGERAAGVVRRLMAAKAESRKSFSEIGEEAGLTNVYVAQLLRRQAQLKPETAPALRAAVPGLTDDLVALMMEPPFRSYHPDIVHEPAIYRLNEAVMHFGESIKEIINEEFGDGIMSAIDFYCSVDKVQGADGKDRVVVTFDGKYLPYSEQRSDHMMSRLTRKTS</sequence>
<protein>
    <recommendedName>
        <fullName evidence="1">Cyanate hydratase</fullName>
        <shortName evidence="1">Cyanase</shortName>
        <ecNumber evidence="1">4.2.1.104</ecNumber>
    </recommendedName>
    <alternativeName>
        <fullName evidence="1">Cyanate hydrolase</fullName>
    </alternativeName>
    <alternativeName>
        <fullName evidence="1">Cyanate lyase</fullName>
    </alternativeName>
</protein>
<proteinExistence type="inferred from homology"/>
<gene>
    <name evidence="1" type="primary">CYN</name>
    <name type="ORF">OsI_33997</name>
</gene>
<accession>A2Z8F9</accession>
<name>CYNS_ORYSI</name>
<reference key="1">
    <citation type="journal article" date="2005" name="PLoS Biol.">
        <title>The genomes of Oryza sativa: a history of duplications.</title>
        <authorList>
            <person name="Yu J."/>
            <person name="Wang J."/>
            <person name="Lin W."/>
            <person name="Li S."/>
            <person name="Li H."/>
            <person name="Zhou J."/>
            <person name="Ni P."/>
            <person name="Dong W."/>
            <person name="Hu S."/>
            <person name="Zeng C."/>
            <person name="Zhang J."/>
            <person name="Zhang Y."/>
            <person name="Li R."/>
            <person name="Xu Z."/>
            <person name="Li S."/>
            <person name="Li X."/>
            <person name="Zheng H."/>
            <person name="Cong L."/>
            <person name="Lin L."/>
            <person name="Yin J."/>
            <person name="Geng J."/>
            <person name="Li G."/>
            <person name="Shi J."/>
            <person name="Liu J."/>
            <person name="Lv H."/>
            <person name="Li J."/>
            <person name="Wang J."/>
            <person name="Deng Y."/>
            <person name="Ran L."/>
            <person name="Shi X."/>
            <person name="Wang X."/>
            <person name="Wu Q."/>
            <person name="Li C."/>
            <person name="Ren X."/>
            <person name="Wang J."/>
            <person name="Wang X."/>
            <person name="Li D."/>
            <person name="Liu D."/>
            <person name="Zhang X."/>
            <person name="Ji Z."/>
            <person name="Zhao W."/>
            <person name="Sun Y."/>
            <person name="Zhang Z."/>
            <person name="Bao J."/>
            <person name="Han Y."/>
            <person name="Dong L."/>
            <person name="Ji J."/>
            <person name="Chen P."/>
            <person name="Wu S."/>
            <person name="Liu J."/>
            <person name="Xiao Y."/>
            <person name="Bu D."/>
            <person name="Tan J."/>
            <person name="Yang L."/>
            <person name="Ye C."/>
            <person name="Zhang J."/>
            <person name="Xu J."/>
            <person name="Zhou Y."/>
            <person name="Yu Y."/>
            <person name="Zhang B."/>
            <person name="Zhuang S."/>
            <person name="Wei H."/>
            <person name="Liu B."/>
            <person name="Lei M."/>
            <person name="Yu H."/>
            <person name="Li Y."/>
            <person name="Xu H."/>
            <person name="Wei S."/>
            <person name="He X."/>
            <person name="Fang L."/>
            <person name="Zhang Z."/>
            <person name="Zhang Y."/>
            <person name="Huang X."/>
            <person name="Su Z."/>
            <person name="Tong W."/>
            <person name="Li J."/>
            <person name="Tong Z."/>
            <person name="Li S."/>
            <person name="Ye J."/>
            <person name="Wang L."/>
            <person name="Fang L."/>
            <person name="Lei T."/>
            <person name="Chen C.-S."/>
            <person name="Chen H.-C."/>
            <person name="Xu Z."/>
            <person name="Li H."/>
            <person name="Huang H."/>
            <person name="Zhang F."/>
            <person name="Xu H."/>
            <person name="Li N."/>
            <person name="Zhao C."/>
            <person name="Li S."/>
            <person name="Dong L."/>
            <person name="Huang Y."/>
            <person name="Li L."/>
            <person name="Xi Y."/>
            <person name="Qi Q."/>
            <person name="Li W."/>
            <person name="Zhang B."/>
            <person name="Hu W."/>
            <person name="Zhang Y."/>
            <person name="Tian X."/>
            <person name="Jiao Y."/>
            <person name="Liang X."/>
            <person name="Jin J."/>
            <person name="Gao L."/>
            <person name="Zheng W."/>
            <person name="Hao B."/>
            <person name="Liu S.-M."/>
            <person name="Wang W."/>
            <person name="Yuan L."/>
            <person name="Cao M."/>
            <person name="McDermott J."/>
            <person name="Samudrala R."/>
            <person name="Wang J."/>
            <person name="Wong G.K.-S."/>
            <person name="Yang H."/>
        </authorList>
    </citation>
    <scope>NUCLEOTIDE SEQUENCE [LARGE SCALE GENOMIC DNA]</scope>
    <source>
        <strain>cv. 93-11</strain>
    </source>
</reference>
<dbReference type="EC" id="4.2.1.104" evidence="1"/>
<dbReference type="EMBL" id="CM000135">
    <property type="protein sequence ID" value="EAY78893.1"/>
    <property type="molecule type" value="Genomic_DNA"/>
</dbReference>
<dbReference type="SMR" id="A2Z8F9"/>
<dbReference type="STRING" id="39946.A2Z8F9"/>
<dbReference type="EnsemblPlants" id="BGIOSGA033116-TA">
    <property type="protein sequence ID" value="BGIOSGA033116-PA"/>
    <property type="gene ID" value="BGIOSGA033116"/>
</dbReference>
<dbReference type="EnsemblPlants" id="OsGoSa_10g0014140.01">
    <property type="protein sequence ID" value="OsGoSa_10g0014140.01"/>
    <property type="gene ID" value="OsGoSa_10g0014140"/>
</dbReference>
<dbReference type="EnsemblPlants" id="OsIR64_10g0014120.01">
    <property type="protein sequence ID" value="OsIR64_10g0014120.01"/>
    <property type="gene ID" value="OsIR64_10g0014120"/>
</dbReference>
<dbReference type="EnsemblPlants" id="OsKYG_10g0013720.01">
    <property type="protein sequence ID" value="OsKYG_10g0013720.01"/>
    <property type="gene ID" value="OsKYG_10g0013720"/>
</dbReference>
<dbReference type="EnsemblPlants" id="OsLaMu_10g0014390.01">
    <property type="protein sequence ID" value="OsLaMu_10g0014390.01"/>
    <property type="gene ID" value="OsLaMu_10g0014390"/>
</dbReference>
<dbReference type="EnsemblPlants" id="OsLima_10g0013840.01">
    <property type="protein sequence ID" value="OsLima_10g0013840.01"/>
    <property type="gene ID" value="OsLima_10g0013840"/>
</dbReference>
<dbReference type="EnsemblPlants" id="OsLiXu_10g0013850.01">
    <property type="protein sequence ID" value="OsLiXu_10g0013850.01"/>
    <property type="gene ID" value="OsLiXu_10g0013850"/>
</dbReference>
<dbReference type="EnsemblPlants" id="OsLiXu_Ung0061660.01">
    <property type="protein sequence ID" value="OsLiXu_Ung0061660.01"/>
    <property type="gene ID" value="OsLiXu_Ung0061660"/>
</dbReference>
<dbReference type="EnsemblPlants" id="OsPr106_10g0014130.01">
    <property type="protein sequence ID" value="OsPr106_10g0014130.01"/>
    <property type="gene ID" value="OsPr106_10g0014130"/>
</dbReference>
<dbReference type="EnsemblPlants" id="OsZS97_10G014150_01">
    <property type="protein sequence ID" value="OsZS97_10G014150_01"/>
    <property type="gene ID" value="OsZS97_10G014150"/>
</dbReference>
<dbReference type="Gramene" id="BGIOSGA033116-TA">
    <property type="protein sequence ID" value="BGIOSGA033116-PA"/>
    <property type="gene ID" value="BGIOSGA033116"/>
</dbReference>
<dbReference type="Gramene" id="OsGoSa_10g0014140.01">
    <property type="protein sequence ID" value="OsGoSa_10g0014140.01"/>
    <property type="gene ID" value="OsGoSa_10g0014140"/>
</dbReference>
<dbReference type="Gramene" id="OsIR64_10g0014120.01">
    <property type="protein sequence ID" value="OsIR64_10g0014120.01"/>
    <property type="gene ID" value="OsIR64_10g0014120"/>
</dbReference>
<dbReference type="Gramene" id="OsKYG_10g0013720.01">
    <property type="protein sequence ID" value="OsKYG_10g0013720.01"/>
    <property type="gene ID" value="OsKYG_10g0013720"/>
</dbReference>
<dbReference type="Gramene" id="OsLaMu_10g0014390.01">
    <property type="protein sequence ID" value="OsLaMu_10g0014390.01"/>
    <property type="gene ID" value="OsLaMu_10g0014390"/>
</dbReference>
<dbReference type="Gramene" id="OsLima_10g0013840.01">
    <property type="protein sequence ID" value="OsLima_10g0013840.01"/>
    <property type="gene ID" value="OsLima_10g0013840"/>
</dbReference>
<dbReference type="Gramene" id="OsLiXu_10g0013850.01">
    <property type="protein sequence ID" value="OsLiXu_10g0013850.01"/>
    <property type="gene ID" value="OsLiXu_10g0013850"/>
</dbReference>
<dbReference type="Gramene" id="OsLiXu_Ung0061660.01">
    <property type="protein sequence ID" value="OsLiXu_Ung0061660.01"/>
    <property type="gene ID" value="OsLiXu_Ung0061660"/>
</dbReference>
<dbReference type="Gramene" id="OsPr106_10g0014130.01">
    <property type="protein sequence ID" value="OsPr106_10g0014130.01"/>
    <property type="gene ID" value="OsPr106_10g0014130"/>
</dbReference>
<dbReference type="Gramene" id="OsZS97_10G014150_01">
    <property type="protein sequence ID" value="OsZS97_10G014150_01"/>
    <property type="gene ID" value="OsZS97_10G014150"/>
</dbReference>
<dbReference type="HOGENOM" id="CLU_103452_2_0_1"/>
<dbReference type="OMA" id="AIDFKMD"/>
<dbReference type="OrthoDB" id="10019422at2759"/>
<dbReference type="Proteomes" id="UP000007015">
    <property type="component" value="Chromosome 10"/>
</dbReference>
<dbReference type="GO" id="GO:0008824">
    <property type="term" value="F:cyanate hydratase activity"/>
    <property type="evidence" value="ECO:0007669"/>
    <property type="project" value="UniProtKB-UniRule"/>
</dbReference>
<dbReference type="GO" id="GO:0003677">
    <property type="term" value="F:DNA binding"/>
    <property type="evidence" value="ECO:0007669"/>
    <property type="project" value="InterPro"/>
</dbReference>
<dbReference type="GO" id="GO:0042802">
    <property type="term" value="F:identical protein binding"/>
    <property type="evidence" value="ECO:0007669"/>
    <property type="project" value="EnsemblPlants"/>
</dbReference>
<dbReference type="GO" id="GO:0009440">
    <property type="term" value="P:cyanate catabolic process"/>
    <property type="evidence" value="ECO:0007669"/>
    <property type="project" value="EnsemblPlants"/>
</dbReference>
<dbReference type="GO" id="GO:0009651">
    <property type="term" value="P:response to salt stress"/>
    <property type="evidence" value="ECO:0007669"/>
    <property type="project" value="EnsemblPlants"/>
</dbReference>
<dbReference type="CDD" id="cd00559">
    <property type="entry name" value="Cyanase_C"/>
    <property type="match status" value="1"/>
</dbReference>
<dbReference type="FunFam" id="1.10.260.40:FF:000046">
    <property type="entry name" value="Cyanate hydratase"/>
    <property type="match status" value="1"/>
</dbReference>
<dbReference type="FunFam" id="3.30.1160.10:FF:000002">
    <property type="entry name" value="Cyanate hydratase"/>
    <property type="match status" value="1"/>
</dbReference>
<dbReference type="Gene3D" id="3.30.1160.10">
    <property type="entry name" value="Cyanate lyase, C-terminal domain"/>
    <property type="match status" value="1"/>
</dbReference>
<dbReference type="Gene3D" id="1.10.260.40">
    <property type="entry name" value="lambda repressor-like DNA-binding domains"/>
    <property type="match status" value="1"/>
</dbReference>
<dbReference type="HAMAP" id="MF_00535">
    <property type="entry name" value="Cyanate_hydrat"/>
    <property type="match status" value="1"/>
</dbReference>
<dbReference type="InterPro" id="IPR008076">
    <property type="entry name" value="Cyanase"/>
</dbReference>
<dbReference type="InterPro" id="IPR003712">
    <property type="entry name" value="Cyanate_lyase_C"/>
</dbReference>
<dbReference type="InterPro" id="IPR036581">
    <property type="entry name" value="Cyanate_lyase_C_sf"/>
</dbReference>
<dbReference type="InterPro" id="IPR010982">
    <property type="entry name" value="Lambda_DNA-bd_dom_sf"/>
</dbReference>
<dbReference type="NCBIfam" id="TIGR00673">
    <property type="entry name" value="cynS"/>
    <property type="match status" value="1"/>
</dbReference>
<dbReference type="PANTHER" id="PTHR34186">
    <property type="entry name" value="CYANATE HYDRATASE"/>
    <property type="match status" value="1"/>
</dbReference>
<dbReference type="PANTHER" id="PTHR34186:SF2">
    <property type="entry name" value="CYANATE HYDRATASE"/>
    <property type="match status" value="1"/>
</dbReference>
<dbReference type="Pfam" id="PF02560">
    <property type="entry name" value="Cyanate_lyase"/>
    <property type="match status" value="1"/>
</dbReference>
<dbReference type="PIRSF" id="PIRSF001263">
    <property type="entry name" value="Cyanate_hydratas"/>
    <property type="match status" value="1"/>
</dbReference>
<dbReference type="PRINTS" id="PR01693">
    <property type="entry name" value="CYANASE"/>
</dbReference>
<dbReference type="SMART" id="SM01116">
    <property type="entry name" value="Cyanate_lyase"/>
    <property type="match status" value="1"/>
</dbReference>
<dbReference type="SUPFAM" id="SSF55234">
    <property type="entry name" value="Cyanase C-terminal domain"/>
    <property type="match status" value="1"/>
</dbReference>
<dbReference type="SUPFAM" id="SSF47413">
    <property type="entry name" value="lambda repressor-like DNA-binding domains"/>
    <property type="match status" value="1"/>
</dbReference>
<comment type="function">
    <text evidence="1">Catalyzes the reaction of cyanate with bicarbonate to produce ammonia and carbon dioxide.</text>
</comment>
<comment type="catalytic activity">
    <reaction evidence="1">
        <text>cyanate + hydrogencarbonate + 3 H(+) = NH4(+) + 2 CO2</text>
        <dbReference type="Rhea" id="RHEA:11120"/>
        <dbReference type="ChEBI" id="CHEBI:15378"/>
        <dbReference type="ChEBI" id="CHEBI:16526"/>
        <dbReference type="ChEBI" id="CHEBI:17544"/>
        <dbReference type="ChEBI" id="CHEBI:28938"/>
        <dbReference type="ChEBI" id="CHEBI:29195"/>
        <dbReference type="EC" id="4.2.1.104"/>
    </reaction>
</comment>
<comment type="similarity">
    <text evidence="1">Belongs to the cyanase family.</text>
</comment>
<organism>
    <name type="scientific">Oryza sativa subsp. indica</name>
    <name type="common">Rice</name>
    <dbReference type="NCBI Taxonomy" id="39946"/>
    <lineage>
        <taxon>Eukaryota</taxon>
        <taxon>Viridiplantae</taxon>
        <taxon>Streptophyta</taxon>
        <taxon>Embryophyta</taxon>
        <taxon>Tracheophyta</taxon>
        <taxon>Spermatophyta</taxon>
        <taxon>Magnoliopsida</taxon>
        <taxon>Liliopsida</taxon>
        <taxon>Poales</taxon>
        <taxon>Poaceae</taxon>
        <taxon>BOP clade</taxon>
        <taxon>Oryzoideae</taxon>
        <taxon>Oryzeae</taxon>
        <taxon>Oryzinae</taxon>
        <taxon>Oryza</taxon>
        <taxon>Oryza sativa</taxon>
    </lineage>
</organism>
<evidence type="ECO:0000255" key="1">
    <source>
        <dbReference type="HAMAP-Rule" id="MF_03139"/>
    </source>
</evidence>